<protein>
    <recommendedName>
        <fullName evidence="2">Small ribosomal subunit protein uS12</fullName>
    </recommendedName>
    <alternativeName>
        <fullName evidence="4">30S ribosomal protein S12</fullName>
    </alternativeName>
</protein>
<gene>
    <name evidence="2" type="primary">rpsL</name>
    <name type="ordered locus">MAB_3851c</name>
</gene>
<feature type="chain" id="PRO_1000194194" description="Small ribosomal subunit protein uS12">
    <location>
        <begin position="1"/>
        <end position="124"/>
    </location>
</feature>
<feature type="region of interest" description="Disordered" evidence="3">
    <location>
        <begin position="105"/>
        <end position="124"/>
    </location>
</feature>
<feature type="compositionally biased region" description="Basic residues" evidence="3">
    <location>
        <begin position="108"/>
        <end position="118"/>
    </location>
</feature>
<feature type="modified residue" description="3-methylthioaspartic acid" evidence="1">
    <location>
        <position position="89"/>
    </location>
</feature>
<accession>B1MGI0</accession>
<keyword id="KW-0488">Methylation</keyword>
<keyword id="KW-1185">Reference proteome</keyword>
<keyword id="KW-0687">Ribonucleoprotein</keyword>
<keyword id="KW-0689">Ribosomal protein</keyword>
<keyword id="KW-0694">RNA-binding</keyword>
<keyword id="KW-0699">rRNA-binding</keyword>
<keyword id="KW-0820">tRNA-binding</keyword>
<proteinExistence type="inferred from homology"/>
<name>RS12_MYCA9</name>
<organism>
    <name type="scientific">Mycobacteroides abscessus (strain ATCC 19977 / DSM 44196 / CCUG 20993 / CIP 104536 / JCM 13569 / NCTC 13031 / TMC 1543 / L948)</name>
    <name type="common">Mycobacterium abscessus</name>
    <dbReference type="NCBI Taxonomy" id="561007"/>
    <lineage>
        <taxon>Bacteria</taxon>
        <taxon>Bacillati</taxon>
        <taxon>Actinomycetota</taxon>
        <taxon>Actinomycetes</taxon>
        <taxon>Mycobacteriales</taxon>
        <taxon>Mycobacteriaceae</taxon>
        <taxon>Mycobacteroides</taxon>
        <taxon>Mycobacteroides abscessus</taxon>
    </lineage>
</organism>
<dbReference type="EMBL" id="CU458896">
    <property type="protein sequence ID" value="CAM63925.1"/>
    <property type="molecule type" value="Genomic_DNA"/>
</dbReference>
<dbReference type="RefSeq" id="WP_003929602.1">
    <property type="nucleotide sequence ID" value="NZ_MLCG01000001.1"/>
</dbReference>
<dbReference type="SMR" id="B1MGI0"/>
<dbReference type="GeneID" id="93380789"/>
<dbReference type="KEGG" id="mab:MAB_3851c"/>
<dbReference type="Proteomes" id="UP000007137">
    <property type="component" value="Chromosome"/>
</dbReference>
<dbReference type="GO" id="GO:0015935">
    <property type="term" value="C:small ribosomal subunit"/>
    <property type="evidence" value="ECO:0007669"/>
    <property type="project" value="InterPro"/>
</dbReference>
<dbReference type="GO" id="GO:0019843">
    <property type="term" value="F:rRNA binding"/>
    <property type="evidence" value="ECO:0007669"/>
    <property type="project" value="UniProtKB-UniRule"/>
</dbReference>
<dbReference type="GO" id="GO:0003735">
    <property type="term" value="F:structural constituent of ribosome"/>
    <property type="evidence" value="ECO:0007669"/>
    <property type="project" value="InterPro"/>
</dbReference>
<dbReference type="GO" id="GO:0000049">
    <property type="term" value="F:tRNA binding"/>
    <property type="evidence" value="ECO:0007669"/>
    <property type="project" value="UniProtKB-UniRule"/>
</dbReference>
<dbReference type="GO" id="GO:0006412">
    <property type="term" value="P:translation"/>
    <property type="evidence" value="ECO:0007669"/>
    <property type="project" value="UniProtKB-UniRule"/>
</dbReference>
<dbReference type="CDD" id="cd03368">
    <property type="entry name" value="Ribosomal_S12"/>
    <property type="match status" value="1"/>
</dbReference>
<dbReference type="FunFam" id="2.40.50.140:FF:000001">
    <property type="entry name" value="30S ribosomal protein S12"/>
    <property type="match status" value="1"/>
</dbReference>
<dbReference type="Gene3D" id="2.40.50.140">
    <property type="entry name" value="Nucleic acid-binding proteins"/>
    <property type="match status" value="1"/>
</dbReference>
<dbReference type="HAMAP" id="MF_00403_B">
    <property type="entry name" value="Ribosomal_uS12_B"/>
    <property type="match status" value="1"/>
</dbReference>
<dbReference type="InterPro" id="IPR012340">
    <property type="entry name" value="NA-bd_OB-fold"/>
</dbReference>
<dbReference type="InterPro" id="IPR006032">
    <property type="entry name" value="Ribosomal_uS12"/>
</dbReference>
<dbReference type="InterPro" id="IPR005679">
    <property type="entry name" value="Ribosomal_uS12_bac"/>
</dbReference>
<dbReference type="NCBIfam" id="TIGR00981">
    <property type="entry name" value="rpsL_bact"/>
    <property type="match status" value="1"/>
</dbReference>
<dbReference type="PANTHER" id="PTHR11652">
    <property type="entry name" value="30S RIBOSOMAL PROTEIN S12 FAMILY MEMBER"/>
    <property type="match status" value="1"/>
</dbReference>
<dbReference type="Pfam" id="PF00164">
    <property type="entry name" value="Ribosom_S12_S23"/>
    <property type="match status" value="1"/>
</dbReference>
<dbReference type="PIRSF" id="PIRSF002133">
    <property type="entry name" value="Ribosomal_S12/S23"/>
    <property type="match status" value="1"/>
</dbReference>
<dbReference type="PRINTS" id="PR01034">
    <property type="entry name" value="RIBOSOMALS12"/>
</dbReference>
<dbReference type="SUPFAM" id="SSF50249">
    <property type="entry name" value="Nucleic acid-binding proteins"/>
    <property type="match status" value="1"/>
</dbReference>
<dbReference type="PROSITE" id="PS00055">
    <property type="entry name" value="RIBOSOMAL_S12"/>
    <property type="match status" value="1"/>
</dbReference>
<reference key="1">
    <citation type="journal article" date="2009" name="PLoS ONE">
        <title>Non mycobacterial virulence genes in the genome of the emerging pathogen Mycobacterium abscessus.</title>
        <authorList>
            <person name="Ripoll F."/>
            <person name="Pasek S."/>
            <person name="Schenowitz C."/>
            <person name="Dossat C."/>
            <person name="Barbe V."/>
            <person name="Rottman M."/>
            <person name="Macheras E."/>
            <person name="Heym B."/>
            <person name="Herrmann J.L."/>
            <person name="Daffe M."/>
            <person name="Brosch R."/>
            <person name="Risler J.L."/>
            <person name="Gaillard J.L."/>
        </authorList>
    </citation>
    <scope>NUCLEOTIDE SEQUENCE [LARGE SCALE GENOMIC DNA]</scope>
    <source>
        <strain>ATCC 19977 / DSM 44196 / CCUG 20993 / CIP 104536 / JCM 13569 / NCTC 13031 / TMC 1543 / L948</strain>
    </source>
</reference>
<sequence length="124" mass="13820">MPTINQLVRKGRRDKIAKVKTAALKGSPQRRGVCTRVYTTTPKKPNSALRKVARVRLTSAVEVTAYIPGEGHNLQEHSMVLVRGGRVKDLPGVRYKIIRGSLDTQGVKNRKQARSRYGAKKEKS</sequence>
<comment type="function">
    <text evidence="2">With S4 and S5 plays an important role in translational accuracy.</text>
</comment>
<comment type="function">
    <text evidence="2">Interacts with and stabilizes bases of the 16S rRNA that are involved in tRNA selection in the A site and with the mRNA backbone. Located at the interface of the 30S and 50S subunits, it traverses the body of the 30S subunit contacting proteins on the other side and probably holding the rRNA structure together. The combined cluster of proteins S8, S12 and S17 appears to hold together the shoulder and platform of the 30S subunit.</text>
</comment>
<comment type="subunit">
    <text evidence="2">Part of the 30S ribosomal subunit. Contacts proteins S8 and S17. May interact with IF1 in the 30S initiation complex.</text>
</comment>
<comment type="similarity">
    <text evidence="2">Belongs to the universal ribosomal protein uS12 family.</text>
</comment>
<evidence type="ECO:0000250" key="1"/>
<evidence type="ECO:0000255" key="2">
    <source>
        <dbReference type="HAMAP-Rule" id="MF_00403"/>
    </source>
</evidence>
<evidence type="ECO:0000256" key="3">
    <source>
        <dbReference type="SAM" id="MobiDB-lite"/>
    </source>
</evidence>
<evidence type="ECO:0000305" key="4"/>